<organism>
    <name type="scientific">Clavibacter sepedonicus</name>
    <name type="common">Clavibacter michiganensis subsp. sepedonicus</name>
    <dbReference type="NCBI Taxonomy" id="31964"/>
    <lineage>
        <taxon>Bacteria</taxon>
        <taxon>Bacillati</taxon>
        <taxon>Actinomycetota</taxon>
        <taxon>Actinomycetes</taxon>
        <taxon>Micrococcales</taxon>
        <taxon>Microbacteriaceae</taxon>
        <taxon>Clavibacter</taxon>
    </lineage>
</organism>
<evidence type="ECO:0000255" key="1">
    <source>
        <dbReference type="HAMAP-Rule" id="MF_00003"/>
    </source>
</evidence>
<evidence type="ECO:0000256" key="2">
    <source>
        <dbReference type="SAM" id="MobiDB-lite"/>
    </source>
</evidence>
<proteinExistence type="inferred from homology"/>
<protein>
    <recommendedName>
        <fullName evidence="1">Ribosome-binding factor A</fullName>
    </recommendedName>
</protein>
<reference key="1">
    <citation type="journal article" date="2008" name="J. Bacteriol.">
        <title>Genome of the actinomycete plant pathogen Clavibacter michiganensis subsp. sepedonicus suggests recent niche adaptation.</title>
        <authorList>
            <person name="Bentley S.D."/>
            <person name="Corton C."/>
            <person name="Brown S.E."/>
            <person name="Barron A."/>
            <person name="Clark L."/>
            <person name="Doggett J."/>
            <person name="Harris B."/>
            <person name="Ormond D."/>
            <person name="Quail M.A."/>
            <person name="May G."/>
            <person name="Francis D."/>
            <person name="Knudson D."/>
            <person name="Parkhill J."/>
            <person name="Ishimaru C.A."/>
        </authorList>
    </citation>
    <scope>NUCLEOTIDE SEQUENCE [LARGE SCALE GENOMIC DNA]</scope>
    <source>
        <strain>ATCC 33113 / DSM 20744 / JCM 9667 / LMG 2889 / ICMP 2535 / C-1</strain>
    </source>
</reference>
<sequence length="170" mass="18586">MVDHARARKMADRIKEIVARKLDRGIKDPRLGFVTVTDVRVTGDLQHASIFYTVYGTDEERADTAAALKSATGMLRSEVGKNITARLTPSLEFILDGVPENAAAIDALLEEARRRDADVQAQAKAGVYAGDEDPYVKPRVIGEDEDDDDEEGDEDGDDVDRSAPGYEPAH</sequence>
<feature type="chain" id="PRO_1000073754" description="Ribosome-binding factor A">
    <location>
        <begin position="1"/>
        <end position="170"/>
    </location>
</feature>
<feature type="region of interest" description="Disordered" evidence="2">
    <location>
        <begin position="123"/>
        <end position="170"/>
    </location>
</feature>
<feature type="compositionally biased region" description="Acidic residues" evidence="2">
    <location>
        <begin position="143"/>
        <end position="158"/>
    </location>
</feature>
<keyword id="KW-0963">Cytoplasm</keyword>
<keyword id="KW-0690">Ribosome biogenesis</keyword>
<gene>
    <name evidence="1" type="primary">rbfA</name>
    <name type="ordered locus">CMS1842</name>
</gene>
<name>RBFA_CLASE</name>
<accession>B0RDY8</accession>
<comment type="function">
    <text evidence="1">One of several proteins that assist in the late maturation steps of the functional core of the 30S ribosomal subunit. Associates with free 30S ribosomal subunits (but not with 30S subunits that are part of 70S ribosomes or polysomes). Required for efficient processing of 16S rRNA. May interact with the 5'-terminal helix region of 16S rRNA.</text>
</comment>
<comment type="subunit">
    <text evidence="1">Monomer. Binds 30S ribosomal subunits, but not 50S ribosomal subunits or 70S ribosomes.</text>
</comment>
<comment type="subcellular location">
    <subcellularLocation>
        <location evidence="1">Cytoplasm</location>
    </subcellularLocation>
</comment>
<comment type="similarity">
    <text evidence="1">Belongs to the RbfA family.</text>
</comment>
<dbReference type="EMBL" id="AM849034">
    <property type="protein sequence ID" value="CAQ01947.1"/>
    <property type="molecule type" value="Genomic_DNA"/>
</dbReference>
<dbReference type="RefSeq" id="WP_012299186.1">
    <property type="nucleotide sequence ID" value="NZ_MZMN01000003.1"/>
</dbReference>
<dbReference type="SMR" id="B0RDY8"/>
<dbReference type="STRING" id="31964.CMS1842"/>
<dbReference type="KEGG" id="cms:CMS1842"/>
<dbReference type="eggNOG" id="COG0858">
    <property type="taxonomic scope" value="Bacteria"/>
</dbReference>
<dbReference type="HOGENOM" id="CLU_089475_0_0_11"/>
<dbReference type="OrthoDB" id="307788at2"/>
<dbReference type="Proteomes" id="UP000001318">
    <property type="component" value="Chromosome"/>
</dbReference>
<dbReference type="GO" id="GO:0005829">
    <property type="term" value="C:cytosol"/>
    <property type="evidence" value="ECO:0007669"/>
    <property type="project" value="TreeGrafter"/>
</dbReference>
<dbReference type="GO" id="GO:0043024">
    <property type="term" value="F:ribosomal small subunit binding"/>
    <property type="evidence" value="ECO:0007669"/>
    <property type="project" value="TreeGrafter"/>
</dbReference>
<dbReference type="GO" id="GO:0030490">
    <property type="term" value="P:maturation of SSU-rRNA"/>
    <property type="evidence" value="ECO:0007669"/>
    <property type="project" value="UniProtKB-UniRule"/>
</dbReference>
<dbReference type="Gene3D" id="3.30.300.20">
    <property type="match status" value="1"/>
</dbReference>
<dbReference type="HAMAP" id="MF_00003">
    <property type="entry name" value="RbfA"/>
    <property type="match status" value="1"/>
</dbReference>
<dbReference type="InterPro" id="IPR015946">
    <property type="entry name" value="KH_dom-like_a/b"/>
</dbReference>
<dbReference type="InterPro" id="IPR000238">
    <property type="entry name" value="RbfA"/>
</dbReference>
<dbReference type="InterPro" id="IPR023799">
    <property type="entry name" value="RbfA_dom_sf"/>
</dbReference>
<dbReference type="NCBIfam" id="TIGR00082">
    <property type="entry name" value="rbfA"/>
    <property type="match status" value="1"/>
</dbReference>
<dbReference type="PANTHER" id="PTHR33515">
    <property type="entry name" value="RIBOSOME-BINDING FACTOR A, CHLOROPLASTIC-RELATED"/>
    <property type="match status" value="1"/>
</dbReference>
<dbReference type="PANTHER" id="PTHR33515:SF1">
    <property type="entry name" value="RIBOSOME-BINDING FACTOR A, CHLOROPLASTIC-RELATED"/>
    <property type="match status" value="1"/>
</dbReference>
<dbReference type="Pfam" id="PF02033">
    <property type="entry name" value="RBFA"/>
    <property type="match status" value="1"/>
</dbReference>
<dbReference type="SUPFAM" id="SSF89919">
    <property type="entry name" value="Ribosome-binding factor A, RbfA"/>
    <property type="match status" value="1"/>
</dbReference>